<accession>Q96KT6</accession>
<dbReference type="EMBL" id="AJ291678">
    <property type="protein sequence ID" value="CAC82745.1"/>
    <property type="molecule type" value="mRNA"/>
</dbReference>
<dbReference type="BioMuta" id="HGNC:15535"/>
<dbReference type="ProteomicsDB" id="77117"/>
<dbReference type="AGR" id="HGNC:15535"/>
<dbReference type="GeneCards" id="LINC00208"/>
<dbReference type="HGNC" id="HGNC:15535">
    <property type="gene designation" value="LINC00208"/>
</dbReference>
<dbReference type="neXtProt" id="NX_Q96KT6"/>
<dbReference type="PharmGKB" id="PA25957"/>
<dbReference type="InParanoid" id="Q96KT6"/>
<dbReference type="PAN-GO" id="Q96KT6">
    <property type="GO annotations" value="0 GO annotations based on evolutionary models"/>
</dbReference>
<dbReference type="Pharos" id="Q96KT6">
    <property type="development level" value="Tdark"/>
</dbReference>
<dbReference type="Proteomes" id="UP000005640">
    <property type="component" value="Unplaced"/>
</dbReference>
<dbReference type="RNAct" id="Q96KT6">
    <property type="molecule type" value="protein"/>
</dbReference>
<comment type="caution">
    <text evidence="1">Product of a dubious CDS prediction. May be a non-coding RNA.</text>
</comment>
<sequence>MGQSLQEGRKQGRLLPAPSAHFLKHAHLASPSEVGGEPEIGSLCASHVLHMSPLYSVNLQVSPGSLTFHSLSLRSTSTRLQPQSTYIVGPLC</sequence>
<keyword id="KW-1185">Reference proteome</keyword>
<reference key="1">
    <citation type="submission" date="2000-11" db="EMBL/GenBank/DDBJ databases">
        <title>Transcript map of the KWE critical region on chromosome 8p22-p23.</title>
        <authorList>
            <person name="Appel S."/>
            <person name="Bergheim A."/>
            <person name="Reichwald K."/>
            <person name="Reis A."/>
            <person name="Rosenthal A."/>
            <person name="Ramsay M."/>
            <person name="Hennies H."/>
        </authorList>
    </citation>
    <scope>NUCLEOTIDE SEQUENCE [MRNA]</scope>
</reference>
<proteinExistence type="uncertain"/>
<gene>
    <name type="primary">LINC00208</name>
    <name type="synonym">C8orf14</name>
    <name type="synonym">NCRNA00208</name>
</gene>
<protein>
    <recommendedName>
        <fullName>Putative uncharacterized protein encoded by LINC00208</fullName>
    </recommendedName>
</protein>
<evidence type="ECO:0000305" key="1"/>
<organism>
    <name type="scientific">Homo sapiens</name>
    <name type="common">Human</name>
    <dbReference type="NCBI Taxonomy" id="9606"/>
    <lineage>
        <taxon>Eukaryota</taxon>
        <taxon>Metazoa</taxon>
        <taxon>Chordata</taxon>
        <taxon>Craniata</taxon>
        <taxon>Vertebrata</taxon>
        <taxon>Euteleostomi</taxon>
        <taxon>Mammalia</taxon>
        <taxon>Eutheria</taxon>
        <taxon>Euarchontoglires</taxon>
        <taxon>Primates</taxon>
        <taxon>Haplorrhini</taxon>
        <taxon>Catarrhini</taxon>
        <taxon>Hominidae</taxon>
        <taxon>Homo</taxon>
    </lineage>
</organism>
<feature type="chain" id="PRO_0000089610" description="Putative uncharacterized protein encoded by LINC00208">
    <location>
        <begin position="1"/>
        <end position="92"/>
    </location>
</feature>
<name>CH014_HUMAN</name>